<sequence length="178" mass="19432">MSRIGNKVITMPAGVELTNNNNVITVKGPKGELTREFNKNIEIKVEGTEITVVRPNDSKEMKTIHGTTRANLNNMVVGVSEGFKKDLEMKGVGYRAQLQGTKLVLSVGKSHQDEVEAPEGITFTVANPTSISVEGINKEVVGQTAAYIRSLRSPEPYKGKGIRYVGEYVRLKEGKTGK</sequence>
<feature type="chain" id="PRO_0000260952" description="Large ribosomal subunit protein uL6">
    <location>
        <begin position="1"/>
        <end position="178"/>
    </location>
</feature>
<keyword id="KW-0687">Ribonucleoprotein</keyword>
<keyword id="KW-0689">Ribosomal protein</keyword>
<keyword id="KW-0694">RNA-binding</keyword>
<keyword id="KW-0699">rRNA-binding</keyword>
<reference key="1">
    <citation type="journal article" date="2002" name="Proc. Natl. Acad. Sci. U.S.A.">
        <title>Genome sequence of a serotype M3 strain of group A Streptococcus: phage-encoded toxins, the high-virulence phenotype, and clone emergence.</title>
        <authorList>
            <person name="Beres S.B."/>
            <person name="Sylva G.L."/>
            <person name="Barbian K.D."/>
            <person name="Lei B."/>
            <person name="Hoff J.S."/>
            <person name="Mammarella N.D."/>
            <person name="Liu M.-Y."/>
            <person name="Smoot J.C."/>
            <person name="Porcella S.F."/>
            <person name="Parkins L.D."/>
            <person name="Campbell D.S."/>
            <person name="Smith T.M."/>
            <person name="McCormick J.K."/>
            <person name="Leung D.Y.M."/>
            <person name="Schlievert P.M."/>
            <person name="Musser J.M."/>
        </authorList>
    </citation>
    <scope>NUCLEOTIDE SEQUENCE [LARGE SCALE GENOMIC DNA]</scope>
    <source>
        <strain>ATCC BAA-595 / MGAS315</strain>
    </source>
</reference>
<comment type="function">
    <text evidence="1">This protein binds to the 23S rRNA, and is important in its secondary structure. It is located near the subunit interface in the base of the L7/L12 stalk, and near the tRNA binding site of the peptidyltransferase center.</text>
</comment>
<comment type="subunit">
    <text evidence="1">Part of the 50S ribosomal subunit.</text>
</comment>
<comment type="similarity">
    <text evidence="1">Belongs to the universal ribosomal protein uL6 family.</text>
</comment>
<dbReference type="EMBL" id="AE014074">
    <property type="protein sequence ID" value="AAM78662.1"/>
    <property type="molecule type" value="Genomic_DNA"/>
</dbReference>
<dbReference type="RefSeq" id="WP_002986629.1">
    <property type="nucleotide sequence ID" value="NC_004070.1"/>
</dbReference>
<dbReference type="SMR" id="P0DE58"/>
<dbReference type="GeneID" id="69900041"/>
<dbReference type="KEGG" id="spg:SpyM3_0055"/>
<dbReference type="HOGENOM" id="CLU_065464_1_2_9"/>
<dbReference type="Proteomes" id="UP000000564">
    <property type="component" value="Chromosome"/>
</dbReference>
<dbReference type="GO" id="GO:0022625">
    <property type="term" value="C:cytosolic large ribosomal subunit"/>
    <property type="evidence" value="ECO:0007669"/>
    <property type="project" value="TreeGrafter"/>
</dbReference>
<dbReference type="GO" id="GO:0019843">
    <property type="term" value="F:rRNA binding"/>
    <property type="evidence" value="ECO:0007669"/>
    <property type="project" value="UniProtKB-UniRule"/>
</dbReference>
<dbReference type="GO" id="GO:0003735">
    <property type="term" value="F:structural constituent of ribosome"/>
    <property type="evidence" value="ECO:0007669"/>
    <property type="project" value="InterPro"/>
</dbReference>
<dbReference type="GO" id="GO:0002181">
    <property type="term" value="P:cytoplasmic translation"/>
    <property type="evidence" value="ECO:0007669"/>
    <property type="project" value="TreeGrafter"/>
</dbReference>
<dbReference type="FunFam" id="3.90.930.12:FF:000001">
    <property type="entry name" value="50S ribosomal protein L6"/>
    <property type="match status" value="1"/>
</dbReference>
<dbReference type="FunFam" id="3.90.930.12:FF:000002">
    <property type="entry name" value="50S ribosomal protein L6"/>
    <property type="match status" value="1"/>
</dbReference>
<dbReference type="Gene3D" id="3.90.930.12">
    <property type="entry name" value="Ribosomal protein L6, alpha-beta domain"/>
    <property type="match status" value="2"/>
</dbReference>
<dbReference type="HAMAP" id="MF_01365_B">
    <property type="entry name" value="Ribosomal_uL6_B"/>
    <property type="match status" value="1"/>
</dbReference>
<dbReference type="InterPro" id="IPR000702">
    <property type="entry name" value="Ribosomal_uL6-like"/>
</dbReference>
<dbReference type="InterPro" id="IPR036789">
    <property type="entry name" value="Ribosomal_uL6-like_a/b-dom_sf"/>
</dbReference>
<dbReference type="InterPro" id="IPR020040">
    <property type="entry name" value="Ribosomal_uL6_a/b-dom"/>
</dbReference>
<dbReference type="InterPro" id="IPR019906">
    <property type="entry name" value="Ribosomal_uL6_bac-type"/>
</dbReference>
<dbReference type="InterPro" id="IPR002358">
    <property type="entry name" value="Ribosomal_uL6_CS"/>
</dbReference>
<dbReference type="NCBIfam" id="TIGR03654">
    <property type="entry name" value="L6_bact"/>
    <property type="match status" value="1"/>
</dbReference>
<dbReference type="PANTHER" id="PTHR11655">
    <property type="entry name" value="60S/50S RIBOSOMAL PROTEIN L6/L9"/>
    <property type="match status" value="1"/>
</dbReference>
<dbReference type="PANTHER" id="PTHR11655:SF14">
    <property type="entry name" value="LARGE RIBOSOMAL SUBUNIT PROTEIN UL6M"/>
    <property type="match status" value="1"/>
</dbReference>
<dbReference type="Pfam" id="PF00347">
    <property type="entry name" value="Ribosomal_L6"/>
    <property type="match status" value="2"/>
</dbReference>
<dbReference type="PIRSF" id="PIRSF002162">
    <property type="entry name" value="Ribosomal_L6"/>
    <property type="match status" value="1"/>
</dbReference>
<dbReference type="PRINTS" id="PR00059">
    <property type="entry name" value="RIBOSOMALL6"/>
</dbReference>
<dbReference type="SUPFAM" id="SSF56053">
    <property type="entry name" value="Ribosomal protein L6"/>
    <property type="match status" value="2"/>
</dbReference>
<dbReference type="PROSITE" id="PS00525">
    <property type="entry name" value="RIBOSOMAL_L6_1"/>
    <property type="match status" value="1"/>
</dbReference>
<proteinExistence type="inferred from homology"/>
<evidence type="ECO:0000255" key="1">
    <source>
        <dbReference type="HAMAP-Rule" id="MF_01365"/>
    </source>
</evidence>
<evidence type="ECO:0000305" key="2"/>
<accession>P0DE58</accession>
<accession>Q79YR3</accession>
<accession>Q7CFK7</accession>
<gene>
    <name evidence="1" type="primary">rplF</name>
    <name type="ordered locus">SpyM3_0055</name>
</gene>
<protein>
    <recommendedName>
        <fullName evidence="1">Large ribosomal subunit protein uL6</fullName>
    </recommendedName>
    <alternativeName>
        <fullName evidence="2">50S ribosomal protein L6</fullName>
    </alternativeName>
</protein>
<name>RL6_STRP3</name>
<organism>
    <name type="scientific">Streptococcus pyogenes serotype M3 (strain ATCC BAA-595 / MGAS315)</name>
    <dbReference type="NCBI Taxonomy" id="198466"/>
    <lineage>
        <taxon>Bacteria</taxon>
        <taxon>Bacillati</taxon>
        <taxon>Bacillota</taxon>
        <taxon>Bacilli</taxon>
        <taxon>Lactobacillales</taxon>
        <taxon>Streptococcaceae</taxon>
        <taxon>Streptococcus</taxon>
    </lineage>
</organism>